<comment type="function">
    <text evidence="1">Functions as a nucleotide exchange factor (NEF) for Hsp70 chaperones which accelerates the release of ADP. Required for fully efficient Hsp70-mediated folding of proteins (By similarity).</text>
</comment>
<comment type="subcellular location">
    <subcellularLocation>
        <location evidence="1">Cytoplasm</location>
    </subcellularLocation>
</comment>
<comment type="similarity">
    <text evidence="2">Belongs to the FES1 family.</text>
</comment>
<proteinExistence type="inferred from homology"/>
<organism>
    <name type="scientific">Candida glabrata (strain ATCC 2001 / BCRC 20586 / JCM 3761 / NBRC 0622 / NRRL Y-65 / CBS 138)</name>
    <name type="common">Yeast</name>
    <name type="synonym">Nakaseomyces glabratus</name>
    <dbReference type="NCBI Taxonomy" id="284593"/>
    <lineage>
        <taxon>Eukaryota</taxon>
        <taxon>Fungi</taxon>
        <taxon>Dikarya</taxon>
        <taxon>Ascomycota</taxon>
        <taxon>Saccharomycotina</taxon>
        <taxon>Saccharomycetes</taxon>
        <taxon>Saccharomycetales</taxon>
        <taxon>Saccharomycetaceae</taxon>
        <taxon>Nakaseomyces</taxon>
    </lineage>
</organism>
<accession>Q6FM01</accession>
<gene>
    <name type="primary">FES1</name>
    <name type="ordered locus">CAGL0K12144g</name>
</gene>
<feature type="chain" id="PRO_0000285389" description="Hsp70 nucleotide exchange factor FES1">
    <location>
        <begin position="1"/>
        <end position="291"/>
    </location>
</feature>
<feature type="repeat" description="ARM 1">
    <location>
        <begin position="13"/>
        <end position="57"/>
    </location>
</feature>
<feature type="repeat" description="ARM 2">
    <location>
        <begin position="76"/>
        <end position="115"/>
    </location>
</feature>
<feature type="repeat" description="ARM 3">
    <location>
        <begin position="119"/>
        <end position="160"/>
    </location>
</feature>
<feature type="repeat" description="ARM 4">
    <location>
        <begin position="163"/>
        <end position="204"/>
    </location>
</feature>
<feature type="repeat" description="ARM 5">
    <location>
        <begin position="210"/>
        <end position="249"/>
    </location>
</feature>
<protein>
    <recommendedName>
        <fullName>Hsp70 nucleotide exchange factor FES1</fullName>
    </recommendedName>
</protein>
<keyword id="KW-0963">Cytoplasm</keyword>
<keyword id="KW-1185">Reference proteome</keyword>
<keyword id="KW-0677">Repeat</keyword>
<keyword id="KW-0810">Translation regulation</keyword>
<evidence type="ECO:0000250" key="1"/>
<evidence type="ECO:0000305" key="2"/>
<reference key="1">
    <citation type="journal article" date="2004" name="Nature">
        <title>Genome evolution in yeasts.</title>
        <authorList>
            <person name="Dujon B."/>
            <person name="Sherman D."/>
            <person name="Fischer G."/>
            <person name="Durrens P."/>
            <person name="Casaregola S."/>
            <person name="Lafontaine I."/>
            <person name="de Montigny J."/>
            <person name="Marck C."/>
            <person name="Neuveglise C."/>
            <person name="Talla E."/>
            <person name="Goffard N."/>
            <person name="Frangeul L."/>
            <person name="Aigle M."/>
            <person name="Anthouard V."/>
            <person name="Babour A."/>
            <person name="Barbe V."/>
            <person name="Barnay S."/>
            <person name="Blanchin S."/>
            <person name="Beckerich J.-M."/>
            <person name="Beyne E."/>
            <person name="Bleykasten C."/>
            <person name="Boisrame A."/>
            <person name="Boyer J."/>
            <person name="Cattolico L."/>
            <person name="Confanioleri F."/>
            <person name="de Daruvar A."/>
            <person name="Despons L."/>
            <person name="Fabre E."/>
            <person name="Fairhead C."/>
            <person name="Ferry-Dumazet H."/>
            <person name="Groppi A."/>
            <person name="Hantraye F."/>
            <person name="Hennequin C."/>
            <person name="Jauniaux N."/>
            <person name="Joyet P."/>
            <person name="Kachouri R."/>
            <person name="Kerrest A."/>
            <person name="Koszul R."/>
            <person name="Lemaire M."/>
            <person name="Lesur I."/>
            <person name="Ma L."/>
            <person name="Muller H."/>
            <person name="Nicaud J.-M."/>
            <person name="Nikolski M."/>
            <person name="Oztas S."/>
            <person name="Ozier-Kalogeropoulos O."/>
            <person name="Pellenz S."/>
            <person name="Potier S."/>
            <person name="Richard G.-F."/>
            <person name="Straub M.-L."/>
            <person name="Suleau A."/>
            <person name="Swennen D."/>
            <person name="Tekaia F."/>
            <person name="Wesolowski-Louvel M."/>
            <person name="Westhof E."/>
            <person name="Wirth B."/>
            <person name="Zeniou-Meyer M."/>
            <person name="Zivanovic Y."/>
            <person name="Bolotin-Fukuhara M."/>
            <person name="Thierry A."/>
            <person name="Bouchier C."/>
            <person name="Caudron B."/>
            <person name="Scarpelli C."/>
            <person name="Gaillardin C."/>
            <person name="Weissenbach J."/>
            <person name="Wincker P."/>
            <person name="Souciet J.-L."/>
        </authorList>
    </citation>
    <scope>NUCLEOTIDE SEQUENCE [LARGE SCALE GENOMIC DNA]</scope>
    <source>
        <strain>ATCC 2001 / BCRC 20586 / JCM 3761 / NBRC 0622 / NRRL Y-65 / CBS 138</strain>
    </source>
</reference>
<dbReference type="EMBL" id="CR380957">
    <property type="protein sequence ID" value="CAG61706.1"/>
    <property type="molecule type" value="Genomic_DNA"/>
</dbReference>
<dbReference type="RefSeq" id="XP_448743.1">
    <property type="nucleotide sequence ID" value="XM_448743.1"/>
</dbReference>
<dbReference type="SMR" id="Q6FM01"/>
<dbReference type="FunCoup" id="Q6FM01">
    <property type="interactions" value="250"/>
</dbReference>
<dbReference type="STRING" id="284593.Q6FM01"/>
<dbReference type="EnsemblFungi" id="CAGL0K12144g-T">
    <property type="protein sequence ID" value="CAGL0K12144g-T-p1"/>
    <property type="gene ID" value="CAGL0K12144g"/>
</dbReference>
<dbReference type="GeneID" id="2889971"/>
<dbReference type="KEGG" id="cgr:2889971"/>
<dbReference type="CGD" id="CAL0134753">
    <property type="gene designation" value="FES1"/>
</dbReference>
<dbReference type="VEuPathDB" id="FungiDB:CAGL0K12144g"/>
<dbReference type="eggNOG" id="KOG2160">
    <property type="taxonomic scope" value="Eukaryota"/>
</dbReference>
<dbReference type="HOGENOM" id="CLU_046722_1_0_1"/>
<dbReference type="InParanoid" id="Q6FM01"/>
<dbReference type="OMA" id="LHWSIAN"/>
<dbReference type="Proteomes" id="UP000002428">
    <property type="component" value="Chromosome K"/>
</dbReference>
<dbReference type="GO" id="GO:0005829">
    <property type="term" value="C:cytosol"/>
    <property type="evidence" value="ECO:0007669"/>
    <property type="project" value="EnsemblFungi"/>
</dbReference>
<dbReference type="GO" id="GO:0005783">
    <property type="term" value="C:endoplasmic reticulum"/>
    <property type="evidence" value="ECO:0007669"/>
    <property type="project" value="TreeGrafter"/>
</dbReference>
<dbReference type="GO" id="GO:0000774">
    <property type="term" value="F:adenyl-nucleotide exchange factor activity"/>
    <property type="evidence" value="ECO:0007669"/>
    <property type="project" value="EnsemblFungi"/>
</dbReference>
<dbReference type="GO" id="GO:0071629">
    <property type="term" value="P:cytoplasm protein quality control by the ubiquitin-proteasome system"/>
    <property type="evidence" value="ECO:0007669"/>
    <property type="project" value="EnsemblFungi"/>
</dbReference>
<dbReference type="GO" id="GO:0006417">
    <property type="term" value="P:regulation of translation"/>
    <property type="evidence" value="ECO:0007669"/>
    <property type="project" value="UniProtKB-KW"/>
</dbReference>
<dbReference type="Gene3D" id="1.25.10.10">
    <property type="entry name" value="Leucine-rich Repeat Variant"/>
    <property type="match status" value="1"/>
</dbReference>
<dbReference type="InterPro" id="IPR011989">
    <property type="entry name" value="ARM-like"/>
</dbReference>
<dbReference type="InterPro" id="IPR016024">
    <property type="entry name" value="ARM-type_fold"/>
</dbReference>
<dbReference type="InterPro" id="IPR050693">
    <property type="entry name" value="Hsp70_NEF-Inhibitors"/>
</dbReference>
<dbReference type="InterPro" id="IPR013918">
    <property type="entry name" value="Nucleotide_exch_fac_Fes1"/>
</dbReference>
<dbReference type="PANTHER" id="PTHR19316:SF18">
    <property type="entry name" value="HSP70-BINDING PROTEIN 1"/>
    <property type="match status" value="1"/>
</dbReference>
<dbReference type="PANTHER" id="PTHR19316">
    <property type="entry name" value="PROTEIN FOLDING REGULATOR"/>
    <property type="match status" value="1"/>
</dbReference>
<dbReference type="Pfam" id="PF08609">
    <property type="entry name" value="Fes1"/>
    <property type="match status" value="1"/>
</dbReference>
<dbReference type="SUPFAM" id="SSF48371">
    <property type="entry name" value="ARM repeat"/>
    <property type="match status" value="1"/>
</dbReference>
<name>FES1_CANGA</name>
<sequence length="291" mass="32179">MEKLLHWSIANAQGDKEAIEKAGAPDPKLLEQLFGGGGPDDPTLMKEAMAVIMNPEADLENKLIAYDNFEMLIENLDNANNIENMKLWEPILKTLEDNEADLRASGLSVIGTAVQNNTDSQTNFLKYEGGLKILIAIAKSSEEPSDVRIKAFYALSNLLRNHIEAGKKFQALGGLDVFPVALNDPKATPKLKMRAISALSAFLSSSKIDEQLLDTLRKDGVLVSVIENLGTDNVNVIDRVLSVLSHLISSGIKFNDSELEMLQKEFEKIDSLKDRLNEDDYLAVKYVFSKK</sequence>